<keyword id="KW-0150">Chloroplast</keyword>
<keyword id="KW-0934">Plastid</keyword>
<keyword id="KW-0687">Ribonucleoprotein</keyword>
<keyword id="KW-0689">Ribosomal protein</keyword>
<feature type="chain" id="PRO_0000354637" description="Large ribosomal subunit protein uL16c">
    <location>
        <begin position="1"/>
        <end position="137"/>
    </location>
</feature>
<evidence type="ECO:0000255" key="1">
    <source>
        <dbReference type="HAMAP-Rule" id="MF_01342"/>
    </source>
</evidence>
<evidence type="ECO:0000305" key="2"/>
<accession>A1E9M8</accession>
<sequence length="137" mass="15632">MLSNPKRTRFRKQHRGRMKGKSFRGNRICFGRYALQALEPAWITARQIEAGRRAITRYARRGGKIWVRIFPDKPVTLRPTETRMGSGKGSPEYWVAVVKPGRILYEMGGVSETVARAAISIAASKMPIRSQFIRLEI</sequence>
<gene>
    <name evidence="1" type="primary">rpl16</name>
</gene>
<geneLocation type="chloroplast"/>
<name>RK16_HORVU</name>
<proteinExistence type="inferred from homology"/>
<protein>
    <recommendedName>
        <fullName evidence="1">Large ribosomal subunit protein uL16c</fullName>
    </recommendedName>
    <alternativeName>
        <fullName evidence="2">50S ribosomal protein L16, chloroplastic</fullName>
    </alternativeName>
</protein>
<organism>
    <name type="scientific">Hordeum vulgare</name>
    <name type="common">Barley</name>
    <dbReference type="NCBI Taxonomy" id="4513"/>
    <lineage>
        <taxon>Eukaryota</taxon>
        <taxon>Viridiplantae</taxon>
        <taxon>Streptophyta</taxon>
        <taxon>Embryophyta</taxon>
        <taxon>Tracheophyta</taxon>
        <taxon>Spermatophyta</taxon>
        <taxon>Magnoliopsida</taxon>
        <taxon>Liliopsida</taxon>
        <taxon>Poales</taxon>
        <taxon>Poaceae</taxon>
        <taxon>BOP clade</taxon>
        <taxon>Pooideae</taxon>
        <taxon>Triticodae</taxon>
        <taxon>Triticeae</taxon>
        <taxon>Hordeinae</taxon>
        <taxon>Hordeum</taxon>
    </lineage>
</organism>
<reference key="1">
    <citation type="journal article" date="2007" name="Theor. Appl. Genet.">
        <title>Complete chloroplast genome sequences of Hordeum vulgare, Sorghum bicolor and Agrostis stolonifera, and comparative analyses with other grass genomes.</title>
        <authorList>
            <person name="Saski C."/>
            <person name="Lee S.-B."/>
            <person name="Fjellheim S."/>
            <person name="Guda C."/>
            <person name="Jansen R.K."/>
            <person name="Luo H."/>
            <person name="Tomkins J."/>
            <person name="Rognli O.A."/>
            <person name="Daniell H."/>
            <person name="Clarke J.L."/>
        </authorList>
    </citation>
    <scope>NUCLEOTIDE SEQUENCE [LARGE SCALE GENOMIC DNA]</scope>
    <source>
        <strain>cv. Morex</strain>
    </source>
</reference>
<dbReference type="EMBL" id="EF115541">
    <property type="protein sequence ID" value="ABK79449.1"/>
    <property type="molecule type" value="Genomic_DNA"/>
</dbReference>
<dbReference type="RefSeq" id="YP_874690.1">
    <property type="nucleotide sequence ID" value="NC_008590.1"/>
</dbReference>
<dbReference type="SMR" id="A1E9M8"/>
<dbReference type="GeneID" id="4525112"/>
<dbReference type="GO" id="GO:0009507">
    <property type="term" value="C:chloroplast"/>
    <property type="evidence" value="ECO:0007669"/>
    <property type="project" value="UniProtKB-SubCell"/>
</dbReference>
<dbReference type="GO" id="GO:0005762">
    <property type="term" value="C:mitochondrial large ribosomal subunit"/>
    <property type="evidence" value="ECO:0007669"/>
    <property type="project" value="TreeGrafter"/>
</dbReference>
<dbReference type="GO" id="GO:0019843">
    <property type="term" value="F:rRNA binding"/>
    <property type="evidence" value="ECO:0007669"/>
    <property type="project" value="InterPro"/>
</dbReference>
<dbReference type="GO" id="GO:0003735">
    <property type="term" value="F:structural constituent of ribosome"/>
    <property type="evidence" value="ECO:0007669"/>
    <property type="project" value="InterPro"/>
</dbReference>
<dbReference type="GO" id="GO:0032543">
    <property type="term" value="P:mitochondrial translation"/>
    <property type="evidence" value="ECO:0007669"/>
    <property type="project" value="TreeGrafter"/>
</dbReference>
<dbReference type="CDD" id="cd01433">
    <property type="entry name" value="Ribosomal_L16_L10e"/>
    <property type="match status" value="1"/>
</dbReference>
<dbReference type="FunFam" id="3.90.1170.10:FF:000001">
    <property type="entry name" value="50S ribosomal protein L16"/>
    <property type="match status" value="1"/>
</dbReference>
<dbReference type="Gene3D" id="3.90.1170.10">
    <property type="entry name" value="Ribosomal protein L10e/L16"/>
    <property type="match status" value="1"/>
</dbReference>
<dbReference type="HAMAP" id="MF_01342">
    <property type="entry name" value="Ribosomal_uL16"/>
    <property type="match status" value="1"/>
</dbReference>
<dbReference type="InterPro" id="IPR047873">
    <property type="entry name" value="Ribosomal_uL16"/>
</dbReference>
<dbReference type="InterPro" id="IPR000114">
    <property type="entry name" value="Ribosomal_uL16_bact-type"/>
</dbReference>
<dbReference type="InterPro" id="IPR020798">
    <property type="entry name" value="Ribosomal_uL16_CS"/>
</dbReference>
<dbReference type="InterPro" id="IPR016180">
    <property type="entry name" value="Ribosomal_uL16_dom"/>
</dbReference>
<dbReference type="InterPro" id="IPR036920">
    <property type="entry name" value="Ribosomal_uL16_sf"/>
</dbReference>
<dbReference type="NCBIfam" id="TIGR01164">
    <property type="entry name" value="rplP_bact"/>
    <property type="match status" value="1"/>
</dbReference>
<dbReference type="PANTHER" id="PTHR12220">
    <property type="entry name" value="50S/60S RIBOSOMAL PROTEIN L16"/>
    <property type="match status" value="1"/>
</dbReference>
<dbReference type="PANTHER" id="PTHR12220:SF13">
    <property type="entry name" value="LARGE RIBOSOMAL SUBUNIT PROTEIN UL16M"/>
    <property type="match status" value="1"/>
</dbReference>
<dbReference type="Pfam" id="PF00252">
    <property type="entry name" value="Ribosomal_L16"/>
    <property type="match status" value="1"/>
</dbReference>
<dbReference type="PRINTS" id="PR00060">
    <property type="entry name" value="RIBOSOMALL16"/>
</dbReference>
<dbReference type="SUPFAM" id="SSF54686">
    <property type="entry name" value="Ribosomal protein L16p/L10e"/>
    <property type="match status" value="1"/>
</dbReference>
<dbReference type="PROSITE" id="PS00586">
    <property type="entry name" value="RIBOSOMAL_L16_1"/>
    <property type="match status" value="1"/>
</dbReference>
<dbReference type="PROSITE" id="PS00701">
    <property type="entry name" value="RIBOSOMAL_L16_2"/>
    <property type="match status" value="1"/>
</dbReference>
<comment type="subunit">
    <text evidence="1">Part of the 50S ribosomal subunit.</text>
</comment>
<comment type="subcellular location">
    <subcellularLocation>
        <location>Plastid</location>
        <location>Chloroplast</location>
    </subcellularLocation>
</comment>
<comment type="similarity">
    <text evidence="1">Belongs to the universal ribosomal protein uL16 family.</text>
</comment>